<name>RS6_BRASB</name>
<proteinExistence type="inferred from homology"/>
<protein>
    <recommendedName>
        <fullName evidence="1">Small ribosomal subunit protein bS6</fullName>
    </recommendedName>
    <alternativeName>
        <fullName evidence="3">30S ribosomal protein S6</fullName>
    </alternativeName>
</protein>
<reference key="1">
    <citation type="journal article" date="2007" name="Science">
        <title>Legumes symbioses: absence of nod genes in photosynthetic bradyrhizobia.</title>
        <authorList>
            <person name="Giraud E."/>
            <person name="Moulin L."/>
            <person name="Vallenet D."/>
            <person name="Barbe V."/>
            <person name="Cytryn E."/>
            <person name="Avarre J.-C."/>
            <person name="Jaubert M."/>
            <person name="Simon D."/>
            <person name="Cartieaux F."/>
            <person name="Prin Y."/>
            <person name="Bena G."/>
            <person name="Hannibal L."/>
            <person name="Fardoux J."/>
            <person name="Kojadinovic M."/>
            <person name="Vuillet L."/>
            <person name="Lajus A."/>
            <person name="Cruveiller S."/>
            <person name="Rouy Z."/>
            <person name="Mangenot S."/>
            <person name="Segurens B."/>
            <person name="Dossat C."/>
            <person name="Franck W.L."/>
            <person name="Chang W.-S."/>
            <person name="Saunders E."/>
            <person name="Bruce D."/>
            <person name="Richardson P."/>
            <person name="Normand P."/>
            <person name="Dreyfus B."/>
            <person name="Pignol D."/>
            <person name="Stacey G."/>
            <person name="Emerich D."/>
            <person name="Vermeglio A."/>
            <person name="Medigue C."/>
            <person name="Sadowsky M."/>
        </authorList>
    </citation>
    <scope>NUCLEOTIDE SEQUENCE [LARGE SCALE GENOMIC DNA]</scope>
    <source>
        <strain>BTAi1 / ATCC BAA-1182</strain>
    </source>
</reference>
<keyword id="KW-1185">Reference proteome</keyword>
<keyword id="KW-0687">Ribonucleoprotein</keyword>
<keyword id="KW-0689">Ribosomal protein</keyword>
<keyword id="KW-0694">RNA-binding</keyword>
<keyword id="KW-0699">rRNA-binding</keyword>
<organism>
    <name type="scientific">Bradyrhizobium sp. (strain BTAi1 / ATCC BAA-1182)</name>
    <dbReference type="NCBI Taxonomy" id="288000"/>
    <lineage>
        <taxon>Bacteria</taxon>
        <taxon>Pseudomonadati</taxon>
        <taxon>Pseudomonadota</taxon>
        <taxon>Alphaproteobacteria</taxon>
        <taxon>Hyphomicrobiales</taxon>
        <taxon>Nitrobacteraceae</taxon>
        <taxon>Bradyrhizobium</taxon>
    </lineage>
</organism>
<feature type="chain" id="PRO_1000005223" description="Small ribosomal subunit protein bS6">
    <location>
        <begin position="1"/>
        <end position="153"/>
    </location>
</feature>
<feature type="region of interest" description="Disordered" evidence="2">
    <location>
        <begin position="97"/>
        <end position="153"/>
    </location>
</feature>
<feature type="compositionally biased region" description="Basic and acidic residues" evidence="2">
    <location>
        <begin position="105"/>
        <end position="147"/>
    </location>
</feature>
<dbReference type="EMBL" id="CP000494">
    <property type="protein sequence ID" value="ABQ35892.1"/>
    <property type="molecule type" value="Genomic_DNA"/>
</dbReference>
<dbReference type="RefSeq" id="WP_012043898.1">
    <property type="nucleotide sequence ID" value="NC_009485.1"/>
</dbReference>
<dbReference type="SMR" id="A5EI98"/>
<dbReference type="STRING" id="288000.BBta_3815"/>
<dbReference type="KEGG" id="bbt:BBta_3815"/>
<dbReference type="eggNOG" id="COG0360">
    <property type="taxonomic scope" value="Bacteria"/>
</dbReference>
<dbReference type="HOGENOM" id="CLU_113441_2_0_5"/>
<dbReference type="OrthoDB" id="9812702at2"/>
<dbReference type="Proteomes" id="UP000000246">
    <property type="component" value="Chromosome"/>
</dbReference>
<dbReference type="GO" id="GO:0022627">
    <property type="term" value="C:cytosolic small ribosomal subunit"/>
    <property type="evidence" value="ECO:0007669"/>
    <property type="project" value="TreeGrafter"/>
</dbReference>
<dbReference type="GO" id="GO:0070181">
    <property type="term" value="F:small ribosomal subunit rRNA binding"/>
    <property type="evidence" value="ECO:0007669"/>
    <property type="project" value="TreeGrafter"/>
</dbReference>
<dbReference type="GO" id="GO:0003735">
    <property type="term" value="F:structural constituent of ribosome"/>
    <property type="evidence" value="ECO:0007669"/>
    <property type="project" value="InterPro"/>
</dbReference>
<dbReference type="GO" id="GO:0006412">
    <property type="term" value="P:translation"/>
    <property type="evidence" value="ECO:0007669"/>
    <property type="project" value="UniProtKB-UniRule"/>
</dbReference>
<dbReference type="CDD" id="cd00473">
    <property type="entry name" value="bS6"/>
    <property type="match status" value="1"/>
</dbReference>
<dbReference type="FunFam" id="3.30.70.60:FF:000017">
    <property type="entry name" value="30S ribosomal protein S6"/>
    <property type="match status" value="1"/>
</dbReference>
<dbReference type="Gene3D" id="3.30.70.60">
    <property type="match status" value="1"/>
</dbReference>
<dbReference type="HAMAP" id="MF_00360">
    <property type="entry name" value="Ribosomal_bS6"/>
    <property type="match status" value="1"/>
</dbReference>
<dbReference type="InterPro" id="IPR000529">
    <property type="entry name" value="Ribosomal_bS6"/>
</dbReference>
<dbReference type="InterPro" id="IPR035980">
    <property type="entry name" value="Ribosomal_bS6_sf"/>
</dbReference>
<dbReference type="InterPro" id="IPR020814">
    <property type="entry name" value="Ribosomal_S6_plastid/chlpt"/>
</dbReference>
<dbReference type="InterPro" id="IPR014717">
    <property type="entry name" value="Transl_elong_EF1B/ribsomal_bS6"/>
</dbReference>
<dbReference type="NCBIfam" id="TIGR00166">
    <property type="entry name" value="S6"/>
    <property type="match status" value="1"/>
</dbReference>
<dbReference type="PANTHER" id="PTHR21011">
    <property type="entry name" value="MITOCHONDRIAL 28S RIBOSOMAL PROTEIN S6"/>
    <property type="match status" value="1"/>
</dbReference>
<dbReference type="PANTHER" id="PTHR21011:SF1">
    <property type="entry name" value="SMALL RIBOSOMAL SUBUNIT PROTEIN BS6M"/>
    <property type="match status" value="1"/>
</dbReference>
<dbReference type="Pfam" id="PF01250">
    <property type="entry name" value="Ribosomal_S6"/>
    <property type="match status" value="1"/>
</dbReference>
<dbReference type="SUPFAM" id="SSF54995">
    <property type="entry name" value="Ribosomal protein S6"/>
    <property type="match status" value="1"/>
</dbReference>
<evidence type="ECO:0000255" key="1">
    <source>
        <dbReference type="HAMAP-Rule" id="MF_00360"/>
    </source>
</evidence>
<evidence type="ECO:0000256" key="2">
    <source>
        <dbReference type="SAM" id="MobiDB-lite"/>
    </source>
</evidence>
<evidence type="ECO:0000305" key="3"/>
<gene>
    <name evidence="1" type="primary">rpsF</name>
    <name type="ordered locus">BBta_3815</name>
</gene>
<accession>A5EI98</accession>
<comment type="function">
    <text evidence="1">Binds together with bS18 to 16S ribosomal RNA.</text>
</comment>
<comment type="similarity">
    <text evidence="1">Belongs to the bacterial ribosomal protein bS6 family.</text>
</comment>
<sequence length="153" mass="17409">MPLYEHVFLARQDASTQQVEELTTQMTGIVEGLGGKVTKTENWGVRSLTYRMNKNRKAHFVLLNIDAPSAAIAEIERQERISEDVIRYLSVRVDELEEGPSAMMRKADRDRERDDRGGGFRGERDGGGFRGDRGDRGDRGPRRPRDEETADEE</sequence>